<reference key="1">
    <citation type="journal article" date="2006" name="BMC Evol. Biol.">
        <title>Complete plastid genome sequences of Drimys, Liriodendron, and Piper: implications for the phylogenetic relationships of magnoliids.</title>
        <authorList>
            <person name="Cai Z."/>
            <person name="Penaflor C."/>
            <person name="Kuehl J.V."/>
            <person name="Leebens-Mack J."/>
            <person name="Carlson J.E."/>
            <person name="dePamphilis C.W."/>
            <person name="Boore J.L."/>
            <person name="Jansen R.K."/>
        </authorList>
    </citation>
    <scope>NUCLEOTIDE SEQUENCE [LARGE SCALE GENOMIC DNA]</scope>
</reference>
<organism>
    <name type="scientific">Drimys granadensis</name>
    <dbReference type="NCBI Taxonomy" id="224735"/>
    <lineage>
        <taxon>Eukaryota</taxon>
        <taxon>Viridiplantae</taxon>
        <taxon>Streptophyta</taxon>
        <taxon>Embryophyta</taxon>
        <taxon>Tracheophyta</taxon>
        <taxon>Spermatophyta</taxon>
        <taxon>Magnoliopsida</taxon>
        <taxon>Magnoliidae</taxon>
        <taxon>Canellales</taxon>
        <taxon>Winteraceae</taxon>
        <taxon>Drimys</taxon>
    </lineage>
</organism>
<name>PSBL_DRIGR</name>
<geneLocation type="chloroplast"/>
<keyword id="KW-0150">Chloroplast</keyword>
<keyword id="KW-0472">Membrane</keyword>
<keyword id="KW-0602">Photosynthesis</keyword>
<keyword id="KW-0604">Photosystem II</keyword>
<keyword id="KW-0934">Plastid</keyword>
<keyword id="KW-0674">Reaction center</keyword>
<keyword id="KW-0793">Thylakoid</keyword>
<keyword id="KW-0812">Transmembrane</keyword>
<keyword id="KW-1133">Transmembrane helix</keyword>
<proteinExistence type="inferred from homology"/>
<sequence length="38" mass="4497">MTQSNPNEQNVELNRTSLYWGLLLIFVLAVLFSNYFFN</sequence>
<evidence type="ECO:0000255" key="1">
    <source>
        <dbReference type="HAMAP-Rule" id="MF_01317"/>
    </source>
</evidence>
<gene>
    <name evidence="1" type="primary">psbL</name>
</gene>
<comment type="function">
    <text evidence="1">One of the components of the core complex of photosystem II (PSII). PSII is a light-driven water:plastoquinone oxidoreductase that uses light energy to abstract electrons from H(2)O, generating O(2) and a proton gradient subsequently used for ATP formation. It consists of a core antenna complex that captures photons, and an electron transfer chain that converts photonic excitation into a charge separation. This subunit is found at the monomer-monomer interface and is required for correct PSII assembly and/or dimerization.</text>
</comment>
<comment type="subunit">
    <text evidence="1">PSII is composed of 1 copy each of membrane proteins PsbA, PsbB, PsbC, PsbD, PsbE, PsbF, PsbH, PsbI, PsbJ, PsbK, PsbL, PsbM, PsbT, PsbX, PsbY, PsbZ, Psb30/Ycf12, at least 3 peripheral proteins of the oxygen-evolving complex and a large number of cofactors. It forms dimeric complexes.</text>
</comment>
<comment type="subcellular location">
    <subcellularLocation>
        <location evidence="1">Plastid</location>
        <location evidence="1">Chloroplast thylakoid membrane</location>
        <topology evidence="1">Single-pass membrane protein</topology>
    </subcellularLocation>
</comment>
<comment type="similarity">
    <text evidence="1">Belongs to the PsbL family.</text>
</comment>
<accession>Q06GY2</accession>
<feature type="chain" id="PRO_0000276206" description="Photosystem II reaction center protein L">
    <location>
        <begin position="1"/>
        <end position="38"/>
    </location>
</feature>
<feature type="transmembrane region" description="Helical" evidence="1">
    <location>
        <begin position="17"/>
        <end position="37"/>
    </location>
</feature>
<dbReference type="EMBL" id="DQ887676">
    <property type="protein sequence ID" value="ABH88312.1"/>
    <property type="molecule type" value="Genomic_DNA"/>
</dbReference>
<dbReference type="RefSeq" id="YP_784401.1">
    <property type="nucleotide sequence ID" value="NC_008456.1"/>
</dbReference>
<dbReference type="SMR" id="Q06GY2"/>
<dbReference type="GeneID" id="4363577"/>
<dbReference type="GO" id="GO:0009535">
    <property type="term" value="C:chloroplast thylakoid membrane"/>
    <property type="evidence" value="ECO:0007669"/>
    <property type="project" value="UniProtKB-SubCell"/>
</dbReference>
<dbReference type="GO" id="GO:0009539">
    <property type="term" value="C:photosystem II reaction center"/>
    <property type="evidence" value="ECO:0007669"/>
    <property type="project" value="InterPro"/>
</dbReference>
<dbReference type="GO" id="GO:0015979">
    <property type="term" value="P:photosynthesis"/>
    <property type="evidence" value="ECO:0007669"/>
    <property type="project" value="UniProtKB-UniRule"/>
</dbReference>
<dbReference type="HAMAP" id="MF_01317">
    <property type="entry name" value="PSII_PsbL"/>
    <property type="match status" value="1"/>
</dbReference>
<dbReference type="InterPro" id="IPR003372">
    <property type="entry name" value="PSII_PsbL"/>
</dbReference>
<dbReference type="InterPro" id="IPR037266">
    <property type="entry name" value="PSII_PsbL_sf"/>
</dbReference>
<dbReference type="NCBIfam" id="NF001972">
    <property type="entry name" value="PRK00753.1"/>
    <property type="match status" value="1"/>
</dbReference>
<dbReference type="Pfam" id="PF02419">
    <property type="entry name" value="PsbL"/>
    <property type="match status" value="1"/>
</dbReference>
<dbReference type="SUPFAM" id="SSF161017">
    <property type="entry name" value="Photosystem II reaction center protein L, PsbL"/>
    <property type="match status" value="1"/>
</dbReference>
<protein>
    <recommendedName>
        <fullName evidence="1">Photosystem II reaction center protein L</fullName>
        <shortName evidence="1">PSII-L</shortName>
    </recommendedName>
</protein>